<protein>
    <recommendedName>
        <fullName evidence="4">Mitochondrial-processing peptidase subunit alpha</fullName>
    </recommendedName>
    <alternativeName>
        <fullName evidence="4">Alpha-MPP</fullName>
    </alternativeName>
    <alternativeName>
        <fullName evidence="5">Inactive zinc metalloprotease mppa-1</fullName>
    </alternativeName>
</protein>
<organism evidence="8">
    <name type="scientific">Caenorhabditis elegans</name>
    <dbReference type="NCBI Taxonomy" id="6239"/>
    <lineage>
        <taxon>Eukaryota</taxon>
        <taxon>Metazoa</taxon>
        <taxon>Ecdysozoa</taxon>
        <taxon>Nematoda</taxon>
        <taxon>Chromadorea</taxon>
        <taxon>Rhabditida</taxon>
        <taxon>Rhabditina</taxon>
        <taxon>Rhabditomorpha</taxon>
        <taxon>Rhabditoidea</taxon>
        <taxon>Rhabditidae</taxon>
        <taxon>Peloderinae</taxon>
        <taxon>Caenorhabditis</taxon>
    </lineage>
</organism>
<comment type="function">
    <text evidence="6">Substrate recognition and binding subunit of the essential mitochondrial processing protease (MPP), which cleaves the mitochondrial sequence off newly imported precursors proteins.</text>
</comment>
<comment type="subunit">
    <text evidence="6">Heterodimer of mppa-1 (alpha) and mppb-1 (beta) subunits, forming the mitochondrial processing protease (MPP) in which mppa-1 is involved in substrate recognition and binding and mppb-1 is the catalytic subunit.</text>
</comment>
<comment type="subcellular location">
    <subcellularLocation>
        <location evidence="1">Mitochondrion matrix</location>
    </subcellularLocation>
</comment>
<comment type="alternative products">
    <event type="alternative splicing"/>
    <isoform>
        <id>Q95XN2-1</id>
        <name evidence="9">a</name>
        <sequence type="displayed"/>
    </isoform>
    <isoform>
        <id>Q95XN2-2</id>
        <name evidence="10">b</name>
        <sequence type="described" ref="VSP_060435"/>
    </isoform>
</comment>
<comment type="disruption phenotype">
    <text evidence="3">RNAi-mediated knockdown causes 63 percent embryonic lethality (PubMed:16788047). Embryonic lethality is further increased in simultaneous RNAi-mediated knockdown of mppa-1 and mppb-1 or ucr-1 and mppa-1 (PubMed:16788047).</text>
</comment>
<comment type="similarity">
    <text evidence="5">Belongs to the peptidase M16 family.</text>
</comment>
<comment type="caution">
    <text evidence="3">Although it belongs to the peptidase M16 family, lacks the zinc-binding sites and appears to lack catalytic activity in vitro.</text>
</comment>
<proteinExistence type="inferred from homology"/>
<name>MPPA_CAEEL</name>
<keyword id="KW-0025">Alternative splicing</keyword>
<keyword id="KW-0496">Mitochondrion</keyword>
<keyword id="KW-1185">Reference proteome</keyword>
<keyword id="KW-0809">Transit peptide</keyword>
<sequence length="514" mass="57494">MLLRKSIPYIKICRDISASVRNNKEIAQKLPLSVPLPMENNSKSIEKGCPPMGRNSRVTRLPNGLKVCTEDTYGDFVTVGVAIESGCRYENGFPFGISRIVEKLAYNSSESFSSRDEVFAKLEENSGIVDCQSTRDTMMYAASCHRDGVDSVIHVLSDTIWKPIFDEQSLEQAKLTVSYENQDLPNRIEAIEILLTDWIHQAAFQNNTIGYPKFGNNSMDKIRVSDVYGFLSRAHTPQRMVVGGVGVGHDEFVSIISRHFDLNKSTWTTQPTVLPAKIPEIDESRAQYTGGELRLDTDLTKLTIGKPYPLLSHVVLGLEGCSYKDEDFVAFCVLQSLLGGGGAFSAGGPGKGMYARMYTELMNRHHWIYSAIAHNHSYSDSGVFTVTASSPPENINDALILLVHQILQLQQGVEPTELARARTQLRSHLMMNLEVRPVLFEDMVRQVLGHGDRKQPEEYAEKIEKVTNSDIIRVTERLLASKPSLVGYGDIKKLKDLRSLDQAVAKRDLKYLFN</sequence>
<gene>
    <name evidence="4 9" type="primary">mppa-1</name>
    <name evidence="7" type="ORF">Y71G12B.24</name>
</gene>
<reference evidence="8" key="1">
    <citation type="journal article" date="1998" name="Science">
        <title>Genome sequence of the nematode C. elegans: a platform for investigating biology.</title>
        <authorList>
            <consortium name="The C. elegans sequencing consortium"/>
        </authorList>
    </citation>
    <scope>NUCLEOTIDE SEQUENCE [LARGE SCALE GENOMIC DNA]</scope>
    <source>
        <strain evidence="8">Bristol N2</strain>
    </source>
</reference>
<reference evidence="5" key="2">
    <citation type="journal article" date="2006" name="J. Biochem.">
        <title>Identification and reverse genetic analysis of mitochondrial processing peptidase and the core protein of the cytochrome bc1 complex of Caenorhabditis elegans, a model parasitic nematode.</title>
        <authorList>
            <person name="Nomura H."/>
            <person name="Athauda S.B."/>
            <person name="Wada H."/>
            <person name="Maruyama Y."/>
            <person name="Takahashi K."/>
            <person name="Inoue H."/>
        </authorList>
    </citation>
    <scope>FUNCTION</scope>
    <scope>LACK OF PROTEASE ACTIVITY</scope>
    <scope>IDENTIFICATION IN COMPLEX WITH MPPB-1</scope>
    <scope>DISRUPTION PHENOTYPE</scope>
</reference>
<feature type="transit peptide" description="Mitochondrion" evidence="2">
    <location>
        <begin position="1"/>
        <end position="55"/>
    </location>
</feature>
<feature type="chain" id="PRO_0000448710" description="Mitochondrial-processing peptidase subunit alpha">
    <location>
        <begin position="56"/>
        <end position="514"/>
    </location>
</feature>
<feature type="splice variant" id="VSP_060435" description="In isoform b." evidence="5">
    <location>
        <begin position="1"/>
        <end position="352"/>
    </location>
</feature>
<dbReference type="EMBL" id="BX284601">
    <property type="protein sequence ID" value="CCD67978.2"/>
    <property type="molecule type" value="Genomic_DNA"/>
</dbReference>
<dbReference type="EMBL" id="BX284601">
    <property type="protein sequence ID" value="CDM63585.1"/>
    <property type="molecule type" value="Genomic_DNA"/>
</dbReference>
<dbReference type="RefSeq" id="NP_001293445.1">
    <property type="nucleotide sequence ID" value="NM_001306516.1"/>
</dbReference>
<dbReference type="RefSeq" id="NP_001380168.1">
    <molecule id="Q95XN2-2"/>
    <property type="nucleotide sequence ID" value="NM_001392974.1"/>
</dbReference>
<dbReference type="RefSeq" id="NP_490888.2">
    <molecule id="Q95XN2-1"/>
    <property type="nucleotide sequence ID" value="NM_058487.7"/>
</dbReference>
<dbReference type="SMR" id="Q95XN2"/>
<dbReference type="FunCoup" id="Q95XN2">
    <property type="interactions" value="3218"/>
</dbReference>
<dbReference type="STRING" id="6239.Y71G12B.24a.1"/>
<dbReference type="PaxDb" id="6239-Y71G12B.24"/>
<dbReference type="PeptideAtlas" id="Q95XN2"/>
<dbReference type="EnsemblMetazoa" id="Y71G12B.24a.1">
    <molecule id="Q95XN2-1"/>
    <property type="protein sequence ID" value="Y71G12B.24a.1"/>
    <property type="gene ID" value="WBGene00022159"/>
</dbReference>
<dbReference type="EnsemblMetazoa" id="Y71G12B.24b.1">
    <molecule id="Q95XN2-2"/>
    <property type="protein sequence ID" value="Y71G12B.24b.1"/>
    <property type="gene ID" value="WBGene00022159"/>
</dbReference>
<dbReference type="GeneID" id="171737"/>
<dbReference type="KEGG" id="cel:CELE_Y71G12B.24"/>
<dbReference type="UCSC" id="Y71G12B.24">
    <molecule id="Q95XN2-1"/>
    <property type="organism name" value="c. elegans"/>
</dbReference>
<dbReference type="AGR" id="WB:WBGene00022159"/>
<dbReference type="CTD" id="171737"/>
<dbReference type="WormBase" id="Y71G12B.24a">
    <molecule id="Q95XN2-1"/>
    <property type="protein sequence ID" value="CE48095"/>
    <property type="gene ID" value="WBGene00022159"/>
    <property type="gene designation" value="mppa-1"/>
</dbReference>
<dbReference type="WormBase" id="Y71G12B.24b">
    <molecule id="Q95XN2-2"/>
    <property type="protein sequence ID" value="CE49612"/>
    <property type="gene ID" value="WBGene00022159"/>
    <property type="gene designation" value="mppa-1"/>
</dbReference>
<dbReference type="eggNOG" id="KOG2067">
    <property type="taxonomic scope" value="Eukaryota"/>
</dbReference>
<dbReference type="GeneTree" id="ENSGT00940000156724"/>
<dbReference type="HOGENOM" id="CLU_009902_5_2_1"/>
<dbReference type="InParanoid" id="Q95XN2"/>
<dbReference type="OMA" id="LKYHHSP"/>
<dbReference type="OrthoDB" id="277191at2759"/>
<dbReference type="Reactome" id="R-CEL-8949664">
    <property type="pathway name" value="Processing of SMDT1"/>
</dbReference>
<dbReference type="Reactome" id="R-CEL-9837999">
    <property type="pathway name" value="Mitochondrial protein degradation"/>
</dbReference>
<dbReference type="PRO" id="PR:Q95XN2"/>
<dbReference type="Proteomes" id="UP000001940">
    <property type="component" value="Chromosome I"/>
</dbReference>
<dbReference type="Bgee" id="WBGene00022159">
    <property type="expression patterns" value="Expressed in germ line (C elegans) and 4 other cell types or tissues"/>
</dbReference>
<dbReference type="GO" id="GO:0017087">
    <property type="term" value="C:mitochondrial processing peptidase complex"/>
    <property type="evidence" value="ECO:0000314"/>
    <property type="project" value="WormBase"/>
</dbReference>
<dbReference type="GO" id="GO:0005739">
    <property type="term" value="C:mitochondrion"/>
    <property type="evidence" value="ECO:0000318"/>
    <property type="project" value="GO_Central"/>
</dbReference>
<dbReference type="GO" id="GO:0046872">
    <property type="term" value="F:metal ion binding"/>
    <property type="evidence" value="ECO:0007669"/>
    <property type="project" value="InterPro"/>
</dbReference>
<dbReference type="GO" id="GO:0006627">
    <property type="term" value="P:protein processing involved in protein targeting to mitochondrion"/>
    <property type="evidence" value="ECO:0000318"/>
    <property type="project" value="GO_Central"/>
</dbReference>
<dbReference type="GO" id="GO:0006508">
    <property type="term" value="P:proteolysis"/>
    <property type="evidence" value="ECO:0000314"/>
    <property type="project" value="WormBase"/>
</dbReference>
<dbReference type="FunFam" id="3.30.830.10:FF:000117">
    <property type="entry name" value="Mitochondrial Processing Peptidase Alpha"/>
    <property type="match status" value="1"/>
</dbReference>
<dbReference type="FunFam" id="3.30.830.10:FF:000014">
    <property type="entry name" value="Mitochondrial-processing peptidase alpha subunit, mitochondrial"/>
    <property type="match status" value="1"/>
</dbReference>
<dbReference type="Gene3D" id="3.30.830.10">
    <property type="entry name" value="Metalloenzyme, LuxS/M16 peptidase-like"/>
    <property type="match status" value="2"/>
</dbReference>
<dbReference type="InterPro" id="IPR011249">
    <property type="entry name" value="Metalloenz_LuxS/M16"/>
</dbReference>
<dbReference type="InterPro" id="IPR050361">
    <property type="entry name" value="MPP/UQCRC_Complex"/>
</dbReference>
<dbReference type="InterPro" id="IPR011765">
    <property type="entry name" value="Pept_M16_N"/>
</dbReference>
<dbReference type="InterPro" id="IPR007863">
    <property type="entry name" value="Peptidase_M16_C"/>
</dbReference>
<dbReference type="PANTHER" id="PTHR11851">
    <property type="entry name" value="METALLOPROTEASE"/>
    <property type="match status" value="1"/>
</dbReference>
<dbReference type="PANTHER" id="PTHR11851:SF49">
    <property type="entry name" value="MITOCHONDRIAL-PROCESSING PEPTIDASE SUBUNIT ALPHA"/>
    <property type="match status" value="1"/>
</dbReference>
<dbReference type="Pfam" id="PF00675">
    <property type="entry name" value="Peptidase_M16"/>
    <property type="match status" value="1"/>
</dbReference>
<dbReference type="Pfam" id="PF05193">
    <property type="entry name" value="Peptidase_M16_C"/>
    <property type="match status" value="1"/>
</dbReference>
<dbReference type="SUPFAM" id="SSF63411">
    <property type="entry name" value="LuxS/MPP-like metallohydrolase"/>
    <property type="match status" value="2"/>
</dbReference>
<evidence type="ECO:0000250" key="1">
    <source>
        <dbReference type="UniProtKB" id="P20069"/>
    </source>
</evidence>
<evidence type="ECO:0000255" key="2"/>
<evidence type="ECO:0000269" key="3">
    <source>
    </source>
</evidence>
<evidence type="ECO:0000303" key="4">
    <source>
    </source>
</evidence>
<evidence type="ECO:0000305" key="5"/>
<evidence type="ECO:0000305" key="6">
    <source>
    </source>
</evidence>
<evidence type="ECO:0000312" key="7">
    <source>
        <dbReference type="EMBL" id="CCD67978.2"/>
    </source>
</evidence>
<evidence type="ECO:0000312" key="8">
    <source>
        <dbReference type="Proteomes" id="UP000001940"/>
    </source>
</evidence>
<evidence type="ECO:0000312" key="9">
    <source>
        <dbReference type="WormBase" id="Y71G12B.24a"/>
    </source>
</evidence>
<evidence type="ECO:0000312" key="10">
    <source>
        <dbReference type="WormBase" id="Y71G12B.24b"/>
    </source>
</evidence>
<accession>Q95XN2</accession>
<accession>W6RR41</accession>